<sequence length="354" mass="40272">MGCTLSAEERAAMERSKAIEKNLKEDGMQAAKDIKLLLLGAGESGKSTIVKQMKIIHEGGFTSEDNKQYKPVVYSNTIQSLVAIIRAMGTLSIPFGDNERESDAKMVLDVIARMEDTEPFSEELLAAMKRLWVDSGVQECLGRANEYQLNDSAKYFLDDLDRLGAKDYMPTEQDILRTRVKTTGIVEVHFSFKNLNFKLFDVGGQRSERKKWIHCFEDVTAIIFCVAMSEYDQVLHEDETTNRMQESLKLFDSICNNKWFTETSIILFLNKKDLFEEKIKKSPLTICFPEYTGKQMYQEASAYIQAQFEAKNKSSAKEIYCHQTCATDTNNIQFVFDAVTDVIIANNLRGCGLY</sequence>
<proteinExistence type="evidence at transcript level"/>
<keyword id="KW-0342">GTP-binding</keyword>
<keyword id="KW-0449">Lipoprotein</keyword>
<keyword id="KW-0460">Magnesium</keyword>
<keyword id="KW-0479">Metal-binding</keyword>
<keyword id="KW-0519">Myristate</keyword>
<keyword id="KW-0547">Nucleotide-binding</keyword>
<keyword id="KW-0564">Palmitate</keyword>
<keyword id="KW-0807">Transducer</keyword>
<protein>
    <recommendedName>
        <fullName>Guanine nucleotide-binding protein G(o) subunit alpha</fullName>
    </recommendedName>
</protein>
<dbReference type="EMBL" id="Z15094">
    <property type="protein sequence ID" value="CAA78806.1"/>
    <property type="molecule type" value="mRNA"/>
</dbReference>
<dbReference type="PIR" id="S27014">
    <property type="entry name" value="S27014"/>
</dbReference>
<dbReference type="SMR" id="P30683"/>
<dbReference type="GO" id="GO:0005737">
    <property type="term" value="C:cytoplasm"/>
    <property type="evidence" value="ECO:0007669"/>
    <property type="project" value="TreeGrafter"/>
</dbReference>
<dbReference type="GO" id="GO:0005834">
    <property type="term" value="C:heterotrimeric G-protein complex"/>
    <property type="evidence" value="ECO:0007669"/>
    <property type="project" value="TreeGrafter"/>
</dbReference>
<dbReference type="GO" id="GO:0001664">
    <property type="term" value="F:G protein-coupled receptor binding"/>
    <property type="evidence" value="ECO:0007669"/>
    <property type="project" value="TreeGrafter"/>
</dbReference>
<dbReference type="GO" id="GO:0031683">
    <property type="term" value="F:G-protein beta/gamma-subunit complex binding"/>
    <property type="evidence" value="ECO:0007669"/>
    <property type="project" value="InterPro"/>
</dbReference>
<dbReference type="GO" id="GO:0005525">
    <property type="term" value="F:GTP binding"/>
    <property type="evidence" value="ECO:0007669"/>
    <property type="project" value="UniProtKB-KW"/>
</dbReference>
<dbReference type="GO" id="GO:0003924">
    <property type="term" value="F:GTPase activity"/>
    <property type="evidence" value="ECO:0007669"/>
    <property type="project" value="InterPro"/>
</dbReference>
<dbReference type="GO" id="GO:0046872">
    <property type="term" value="F:metal ion binding"/>
    <property type="evidence" value="ECO:0007669"/>
    <property type="project" value="UniProtKB-KW"/>
</dbReference>
<dbReference type="GO" id="GO:0007188">
    <property type="term" value="P:adenylate cyclase-modulating G protein-coupled receptor signaling pathway"/>
    <property type="evidence" value="ECO:0007669"/>
    <property type="project" value="InterPro"/>
</dbReference>
<dbReference type="CDD" id="cd00066">
    <property type="entry name" value="G-alpha"/>
    <property type="match status" value="1"/>
</dbReference>
<dbReference type="FunFam" id="1.10.400.10:FF:000001">
    <property type="entry name" value="Guanine nucleotide-binding protein G(I) subunit alpha"/>
    <property type="match status" value="1"/>
</dbReference>
<dbReference type="FunFam" id="3.40.50.300:FF:003559">
    <property type="entry name" value="Guanine nucleotide-binding protein G(i) subunit alpha-1"/>
    <property type="match status" value="1"/>
</dbReference>
<dbReference type="FunFam" id="3.40.50.300:FF:002307">
    <property type="entry name" value="Guanine nucleotide-binding protein G(k) subunit alpha"/>
    <property type="match status" value="1"/>
</dbReference>
<dbReference type="Gene3D" id="1.10.400.10">
    <property type="entry name" value="GI Alpha 1, domain 2-like"/>
    <property type="match status" value="1"/>
</dbReference>
<dbReference type="Gene3D" id="3.40.50.300">
    <property type="entry name" value="P-loop containing nucleotide triphosphate hydrolases"/>
    <property type="match status" value="1"/>
</dbReference>
<dbReference type="InterPro" id="IPR001408">
    <property type="entry name" value="Gprotein_alpha_I"/>
</dbReference>
<dbReference type="InterPro" id="IPR001019">
    <property type="entry name" value="Gprotein_alpha_su"/>
</dbReference>
<dbReference type="InterPro" id="IPR011025">
    <property type="entry name" value="GproteinA_insert"/>
</dbReference>
<dbReference type="InterPro" id="IPR027417">
    <property type="entry name" value="P-loop_NTPase"/>
</dbReference>
<dbReference type="PANTHER" id="PTHR10218:SF362">
    <property type="entry name" value="G PROTEIN ALPHA O SUBUNIT"/>
    <property type="match status" value="1"/>
</dbReference>
<dbReference type="PANTHER" id="PTHR10218">
    <property type="entry name" value="GTP-BINDING PROTEIN ALPHA SUBUNIT"/>
    <property type="match status" value="1"/>
</dbReference>
<dbReference type="Pfam" id="PF00503">
    <property type="entry name" value="G-alpha"/>
    <property type="match status" value="1"/>
</dbReference>
<dbReference type="PRINTS" id="PR00318">
    <property type="entry name" value="GPROTEINA"/>
</dbReference>
<dbReference type="PRINTS" id="PR00441">
    <property type="entry name" value="GPROTEINAI"/>
</dbReference>
<dbReference type="SMART" id="SM00275">
    <property type="entry name" value="G_alpha"/>
    <property type="match status" value="1"/>
</dbReference>
<dbReference type="SUPFAM" id="SSF52540">
    <property type="entry name" value="P-loop containing nucleoside triphosphate hydrolases"/>
    <property type="match status" value="1"/>
</dbReference>
<dbReference type="SUPFAM" id="SSF47895">
    <property type="entry name" value="Transducin (alpha subunit), insertion domain"/>
    <property type="match status" value="1"/>
</dbReference>
<dbReference type="PROSITE" id="PS51882">
    <property type="entry name" value="G_ALPHA"/>
    <property type="match status" value="1"/>
</dbReference>
<reference key="1">
    <citation type="journal article" date="1992" name="FEBS Lett.">
        <title>Molecular cloning of G protein alpha subunits from the central nervous system of the mollusc Lymnaea stagnalis.</title>
        <authorList>
            <person name="Knol J.C."/>
            <person name="Weidemann W."/>
            <person name="Planta R.J."/>
            <person name="Vreugdenhil E."/>
            <person name="van Heerikhuizen H."/>
        </authorList>
    </citation>
    <scope>NUCLEOTIDE SEQUENCE [MRNA]</scope>
    <source>
        <tissue>CNS</tissue>
    </source>
</reference>
<evidence type="ECO:0000250" key="1"/>
<evidence type="ECO:0000255" key="2"/>
<evidence type="ECO:0000255" key="3">
    <source>
        <dbReference type="PROSITE-ProRule" id="PRU01230"/>
    </source>
</evidence>
<evidence type="ECO:0000305" key="4"/>
<feature type="initiator methionine" description="Removed" evidence="1">
    <location>
        <position position="1"/>
    </location>
</feature>
<feature type="chain" id="PRO_0000203712" description="Guanine nucleotide-binding protein G(o) subunit alpha">
    <location>
        <begin position="2"/>
        <end position="354"/>
    </location>
</feature>
<feature type="domain" description="G-alpha" evidence="3">
    <location>
        <begin position="32"/>
        <end position="354"/>
    </location>
</feature>
<feature type="region of interest" description="G1 motif" evidence="3">
    <location>
        <begin position="35"/>
        <end position="48"/>
    </location>
</feature>
<feature type="region of interest" description="G2 motif" evidence="3">
    <location>
        <begin position="174"/>
        <end position="182"/>
    </location>
</feature>
<feature type="region of interest" description="G3 motif" evidence="3">
    <location>
        <begin position="197"/>
        <end position="206"/>
    </location>
</feature>
<feature type="region of interest" description="G4 motif" evidence="3">
    <location>
        <begin position="266"/>
        <end position="273"/>
    </location>
</feature>
<feature type="region of interest" description="G5 motif" evidence="3">
    <location>
        <begin position="324"/>
        <end position="329"/>
    </location>
</feature>
<feature type="binding site" evidence="1">
    <location>
        <begin position="40"/>
        <end position="47"/>
    </location>
    <ligand>
        <name>GTP</name>
        <dbReference type="ChEBI" id="CHEBI:37565"/>
    </ligand>
</feature>
<feature type="binding site" evidence="1">
    <location>
        <position position="47"/>
    </location>
    <ligand>
        <name>Mg(2+)</name>
        <dbReference type="ChEBI" id="CHEBI:18420"/>
    </ligand>
</feature>
<feature type="binding site" evidence="1">
    <location>
        <begin position="176"/>
        <end position="182"/>
    </location>
    <ligand>
        <name>GTP</name>
        <dbReference type="ChEBI" id="CHEBI:37565"/>
    </ligand>
</feature>
<feature type="binding site" evidence="1">
    <location>
        <position position="182"/>
    </location>
    <ligand>
        <name>Mg(2+)</name>
        <dbReference type="ChEBI" id="CHEBI:18420"/>
    </ligand>
</feature>
<feature type="binding site" evidence="1">
    <location>
        <begin position="201"/>
        <end position="205"/>
    </location>
    <ligand>
        <name>GTP</name>
        <dbReference type="ChEBI" id="CHEBI:37565"/>
    </ligand>
</feature>
<feature type="binding site" evidence="1">
    <location>
        <begin position="270"/>
        <end position="273"/>
    </location>
    <ligand>
        <name>GTP</name>
        <dbReference type="ChEBI" id="CHEBI:37565"/>
    </ligand>
</feature>
<feature type="binding site" evidence="1">
    <location>
        <position position="326"/>
    </location>
    <ligand>
        <name>GTP</name>
        <dbReference type="ChEBI" id="CHEBI:37565"/>
    </ligand>
</feature>
<feature type="lipid moiety-binding region" description="N-myristoyl glycine" evidence="2">
    <location>
        <position position="2"/>
    </location>
</feature>
<feature type="lipid moiety-binding region" description="S-palmitoyl cysteine" evidence="2">
    <location>
        <position position="3"/>
    </location>
</feature>
<comment type="function">
    <text>Guanine nucleotide-binding proteins (G proteins) are involved as modulators or transducers in various transmembrane signaling systems. The G(o) protein function is not clear.</text>
</comment>
<comment type="subunit">
    <text>G proteins are composed of 3 units; alpha, beta and gamma. The alpha chain contains the guanine nucleotide binding site.</text>
</comment>
<comment type="similarity">
    <text evidence="4">Belongs to the G-alpha family. G(i/o/t/z) subfamily.</text>
</comment>
<accession>P30683</accession>
<organism>
    <name type="scientific">Lymnaea stagnalis</name>
    <name type="common">Great pond snail</name>
    <name type="synonym">Helix stagnalis</name>
    <dbReference type="NCBI Taxonomy" id="6523"/>
    <lineage>
        <taxon>Eukaryota</taxon>
        <taxon>Metazoa</taxon>
        <taxon>Spiralia</taxon>
        <taxon>Lophotrochozoa</taxon>
        <taxon>Mollusca</taxon>
        <taxon>Gastropoda</taxon>
        <taxon>Heterobranchia</taxon>
        <taxon>Euthyneura</taxon>
        <taxon>Panpulmonata</taxon>
        <taxon>Hygrophila</taxon>
        <taxon>Lymnaeoidea</taxon>
        <taxon>Lymnaeidae</taxon>
        <taxon>Lymnaea</taxon>
    </lineage>
</organism>
<name>GNAO_LYMST</name>